<feature type="chain" id="PRO_1000003010" description="Phospho-N-acetylmuramoyl-pentapeptide-transferase">
    <location>
        <begin position="1"/>
        <end position="359"/>
    </location>
</feature>
<feature type="transmembrane region" description="Helical" evidence="1">
    <location>
        <begin position="3"/>
        <end position="23"/>
    </location>
</feature>
<feature type="transmembrane region" description="Helical" evidence="1">
    <location>
        <begin position="55"/>
        <end position="75"/>
    </location>
</feature>
<feature type="transmembrane region" description="Helical" evidence="1">
    <location>
        <begin position="80"/>
        <end position="100"/>
    </location>
</feature>
<feature type="transmembrane region" description="Helical" evidence="1">
    <location>
        <begin position="117"/>
        <end position="137"/>
    </location>
</feature>
<feature type="transmembrane region" description="Helical" evidence="1">
    <location>
        <begin position="156"/>
        <end position="176"/>
    </location>
</feature>
<feature type="transmembrane region" description="Helical" evidence="1">
    <location>
        <begin position="187"/>
        <end position="207"/>
    </location>
</feature>
<feature type="transmembrane region" description="Helical" evidence="1">
    <location>
        <begin position="231"/>
        <end position="251"/>
    </location>
</feature>
<feature type="transmembrane region" description="Helical" evidence="1">
    <location>
        <begin position="255"/>
        <end position="275"/>
    </location>
</feature>
<feature type="transmembrane region" description="Helical" evidence="1">
    <location>
        <begin position="280"/>
        <end position="300"/>
    </location>
</feature>
<feature type="transmembrane region" description="Helical" evidence="1">
    <location>
        <begin position="334"/>
        <end position="354"/>
    </location>
</feature>
<reference key="1">
    <citation type="submission" date="2006-10" db="EMBL/GenBank/DDBJ databases">
        <authorList>
            <person name="Fleischmann R.D."/>
            <person name="Dodson R.J."/>
            <person name="Haft D.H."/>
            <person name="Merkel J.S."/>
            <person name="Nelson W.C."/>
            <person name="Fraser C.M."/>
        </authorList>
    </citation>
    <scope>NUCLEOTIDE SEQUENCE [LARGE SCALE GENOMIC DNA]</scope>
    <source>
        <strain>104</strain>
    </source>
</reference>
<evidence type="ECO:0000255" key="1">
    <source>
        <dbReference type="HAMAP-Rule" id="MF_00038"/>
    </source>
</evidence>
<organism>
    <name type="scientific">Mycobacterium avium (strain 104)</name>
    <dbReference type="NCBI Taxonomy" id="243243"/>
    <lineage>
        <taxon>Bacteria</taxon>
        <taxon>Bacillati</taxon>
        <taxon>Actinomycetota</taxon>
        <taxon>Actinomycetes</taxon>
        <taxon>Mycobacteriales</taxon>
        <taxon>Mycobacteriaceae</taxon>
        <taxon>Mycobacterium</taxon>
        <taxon>Mycobacterium avium complex (MAC)</taxon>
    </lineage>
</organism>
<proteinExistence type="inferred from homology"/>
<comment type="function">
    <text evidence="1">Catalyzes the initial step of the lipid cycle reactions in the biosynthesis of the cell wall peptidoglycan: transfers peptidoglycan precursor phospho-MurNAc-pentapeptide from UDP-MurNAc-pentapeptide onto the lipid carrier undecaprenyl phosphate, yielding undecaprenyl-pyrophosphoryl-MurNAc-pentapeptide, known as lipid I.</text>
</comment>
<comment type="catalytic activity">
    <reaction evidence="1">
        <text>UDP-N-acetyl-alpha-D-muramoyl-L-alanyl-gamma-D-glutamyl-meso-2,6-diaminopimeloyl-D-alanyl-D-alanine + di-trans,octa-cis-undecaprenyl phosphate = di-trans,octa-cis-undecaprenyl diphospho-N-acetyl-alpha-D-muramoyl-L-alanyl-D-glutamyl-meso-2,6-diaminopimeloyl-D-alanyl-D-alanine + UMP</text>
        <dbReference type="Rhea" id="RHEA:28386"/>
        <dbReference type="ChEBI" id="CHEBI:57865"/>
        <dbReference type="ChEBI" id="CHEBI:60392"/>
        <dbReference type="ChEBI" id="CHEBI:61386"/>
        <dbReference type="ChEBI" id="CHEBI:61387"/>
        <dbReference type="EC" id="2.7.8.13"/>
    </reaction>
</comment>
<comment type="cofactor">
    <cofactor evidence="1">
        <name>Mg(2+)</name>
        <dbReference type="ChEBI" id="CHEBI:18420"/>
    </cofactor>
</comment>
<comment type="pathway">
    <text evidence="1">Cell wall biogenesis; peptidoglycan biosynthesis.</text>
</comment>
<comment type="subcellular location">
    <subcellularLocation>
        <location evidence="1">Cell membrane</location>
        <topology evidence="1">Multi-pass membrane protein</topology>
    </subcellularLocation>
</comment>
<comment type="similarity">
    <text evidence="1">Belongs to the glycosyltransferase 4 family. MraY subfamily.</text>
</comment>
<accession>A0QF49</accession>
<gene>
    <name evidence="1" type="primary">mraY</name>
    <name type="ordered locus">MAV_2333</name>
</gene>
<sequence>MRQILIAVAIALTVSILLTPALIRLFTRQGFGHHTREDGPPTHHAKRGTPSMGGVAIIAGIWAGYLGTHLAGLAFDGEGISASGLLVLSLATVLGIVGFLDDLIKIRRSRNLGLNKTAKTIGQVAAAVLFGVLALGFRNANGLTPASADLSYVREIATVTLAPGLFVLFCVVVVSAWSNAVNFTDGLDGLAAGSMAMVTAAYVLITFWQYRNACVTAPGLGCYNVRDPLDLAIVAAATAGACIGFLWWNAAPAKIFMGDTGSLALGGIIAGISVTSRTEILAVVLGSLFVAEVSSVVLQILTFRTTGRRVFRMAPFHHHFELAGWAETTVIIRFWLLTAIACGLGVALFYGEWLAAIGA</sequence>
<keyword id="KW-0131">Cell cycle</keyword>
<keyword id="KW-0132">Cell division</keyword>
<keyword id="KW-1003">Cell membrane</keyword>
<keyword id="KW-0133">Cell shape</keyword>
<keyword id="KW-0961">Cell wall biogenesis/degradation</keyword>
<keyword id="KW-0460">Magnesium</keyword>
<keyword id="KW-0472">Membrane</keyword>
<keyword id="KW-0479">Metal-binding</keyword>
<keyword id="KW-0573">Peptidoglycan synthesis</keyword>
<keyword id="KW-0808">Transferase</keyword>
<keyword id="KW-0812">Transmembrane</keyword>
<keyword id="KW-1133">Transmembrane helix</keyword>
<dbReference type="EC" id="2.7.8.13" evidence="1"/>
<dbReference type="EMBL" id="CP000479">
    <property type="protein sequence ID" value="ABK65979.1"/>
    <property type="molecule type" value="Genomic_DNA"/>
</dbReference>
<dbReference type="RefSeq" id="WP_009976557.1">
    <property type="nucleotide sequence ID" value="NC_008595.1"/>
</dbReference>
<dbReference type="SMR" id="A0QF49"/>
<dbReference type="GeneID" id="75269882"/>
<dbReference type="KEGG" id="mav:MAV_2333"/>
<dbReference type="HOGENOM" id="CLU_023982_0_1_11"/>
<dbReference type="UniPathway" id="UPA00219"/>
<dbReference type="Proteomes" id="UP000001574">
    <property type="component" value="Chromosome"/>
</dbReference>
<dbReference type="GO" id="GO:0005886">
    <property type="term" value="C:plasma membrane"/>
    <property type="evidence" value="ECO:0007669"/>
    <property type="project" value="UniProtKB-SubCell"/>
</dbReference>
<dbReference type="GO" id="GO:0046872">
    <property type="term" value="F:metal ion binding"/>
    <property type="evidence" value="ECO:0007669"/>
    <property type="project" value="UniProtKB-KW"/>
</dbReference>
<dbReference type="GO" id="GO:0008963">
    <property type="term" value="F:phospho-N-acetylmuramoyl-pentapeptide-transferase activity"/>
    <property type="evidence" value="ECO:0007669"/>
    <property type="project" value="UniProtKB-UniRule"/>
</dbReference>
<dbReference type="GO" id="GO:0051992">
    <property type="term" value="F:UDP-N-acetylmuramoyl-L-alanyl-D-glutamyl-meso-2,6-diaminopimelyl-D-alanyl-D-alanine:undecaprenyl-phosphate transferase activity"/>
    <property type="evidence" value="ECO:0007669"/>
    <property type="project" value="RHEA"/>
</dbReference>
<dbReference type="GO" id="GO:0051301">
    <property type="term" value="P:cell division"/>
    <property type="evidence" value="ECO:0007669"/>
    <property type="project" value="UniProtKB-KW"/>
</dbReference>
<dbReference type="GO" id="GO:0071555">
    <property type="term" value="P:cell wall organization"/>
    <property type="evidence" value="ECO:0007669"/>
    <property type="project" value="UniProtKB-KW"/>
</dbReference>
<dbReference type="GO" id="GO:0009252">
    <property type="term" value="P:peptidoglycan biosynthetic process"/>
    <property type="evidence" value="ECO:0007669"/>
    <property type="project" value="UniProtKB-UniRule"/>
</dbReference>
<dbReference type="GO" id="GO:0008360">
    <property type="term" value="P:regulation of cell shape"/>
    <property type="evidence" value="ECO:0007669"/>
    <property type="project" value="UniProtKB-KW"/>
</dbReference>
<dbReference type="CDD" id="cd06852">
    <property type="entry name" value="GT_MraY"/>
    <property type="match status" value="1"/>
</dbReference>
<dbReference type="HAMAP" id="MF_00038">
    <property type="entry name" value="MraY"/>
    <property type="match status" value="1"/>
</dbReference>
<dbReference type="InterPro" id="IPR000715">
    <property type="entry name" value="Glycosyl_transferase_4"/>
</dbReference>
<dbReference type="InterPro" id="IPR003524">
    <property type="entry name" value="PNAcMuramoyl-5peptid_Trfase"/>
</dbReference>
<dbReference type="InterPro" id="IPR018480">
    <property type="entry name" value="PNAcMuramoyl-5peptid_Trfase_CS"/>
</dbReference>
<dbReference type="NCBIfam" id="TIGR00445">
    <property type="entry name" value="mraY"/>
    <property type="match status" value="1"/>
</dbReference>
<dbReference type="PANTHER" id="PTHR22926">
    <property type="entry name" value="PHOSPHO-N-ACETYLMURAMOYL-PENTAPEPTIDE-TRANSFERASE"/>
    <property type="match status" value="1"/>
</dbReference>
<dbReference type="PANTHER" id="PTHR22926:SF5">
    <property type="entry name" value="PHOSPHO-N-ACETYLMURAMOYL-PENTAPEPTIDE-TRANSFERASE HOMOLOG"/>
    <property type="match status" value="1"/>
</dbReference>
<dbReference type="Pfam" id="PF00953">
    <property type="entry name" value="Glycos_transf_4"/>
    <property type="match status" value="1"/>
</dbReference>
<dbReference type="Pfam" id="PF10555">
    <property type="entry name" value="MraY_sig1"/>
    <property type="match status" value="1"/>
</dbReference>
<dbReference type="PROSITE" id="PS01347">
    <property type="entry name" value="MRAY_1"/>
    <property type="match status" value="1"/>
</dbReference>
<dbReference type="PROSITE" id="PS01348">
    <property type="entry name" value="MRAY_2"/>
    <property type="match status" value="1"/>
</dbReference>
<name>MRAY_MYCA1</name>
<protein>
    <recommendedName>
        <fullName evidence="1">Phospho-N-acetylmuramoyl-pentapeptide-transferase</fullName>
        <ecNumber evidence="1">2.7.8.13</ecNumber>
    </recommendedName>
    <alternativeName>
        <fullName evidence="1">UDP-MurNAc-pentapeptide phosphotransferase</fullName>
    </alternativeName>
</protein>